<keyword id="KW-0054">Arabinose catabolism</keyword>
<keyword id="KW-0119">Carbohydrate metabolism</keyword>
<keyword id="KW-0413">Isomerase</keyword>
<keyword id="KW-0464">Manganese</keyword>
<keyword id="KW-0479">Metal-binding</keyword>
<keyword id="KW-1185">Reference proteome</keyword>
<dbReference type="EC" id="5.3.1.4" evidence="1"/>
<dbReference type="EMBL" id="CP000509">
    <property type="protein sequence ID" value="ABL79925.1"/>
    <property type="molecule type" value="Genomic_DNA"/>
</dbReference>
<dbReference type="RefSeq" id="WP_011753876.1">
    <property type="nucleotide sequence ID" value="NC_008699.1"/>
</dbReference>
<dbReference type="SMR" id="A1SDP0"/>
<dbReference type="STRING" id="196162.Noca_0382"/>
<dbReference type="KEGG" id="nca:Noca_0382"/>
<dbReference type="eggNOG" id="COG2160">
    <property type="taxonomic scope" value="Bacteria"/>
</dbReference>
<dbReference type="HOGENOM" id="CLU_045663_0_0_11"/>
<dbReference type="OrthoDB" id="9765600at2"/>
<dbReference type="UniPathway" id="UPA00145">
    <property type="reaction ID" value="UER00565"/>
</dbReference>
<dbReference type="Proteomes" id="UP000000640">
    <property type="component" value="Chromosome"/>
</dbReference>
<dbReference type="GO" id="GO:0005829">
    <property type="term" value="C:cytosol"/>
    <property type="evidence" value="ECO:0007669"/>
    <property type="project" value="TreeGrafter"/>
</dbReference>
<dbReference type="GO" id="GO:0008733">
    <property type="term" value="F:L-arabinose isomerase activity"/>
    <property type="evidence" value="ECO:0007669"/>
    <property type="project" value="UniProtKB-UniRule"/>
</dbReference>
<dbReference type="GO" id="GO:0030145">
    <property type="term" value="F:manganese ion binding"/>
    <property type="evidence" value="ECO:0007669"/>
    <property type="project" value="UniProtKB-UniRule"/>
</dbReference>
<dbReference type="GO" id="GO:0019569">
    <property type="term" value="P:L-arabinose catabolic process to xylulose 5-phosphate"/>
    <property type="evidence" value="ECO:0007669"/>
    <property type="project" value="UniProtKB-UniRule"/>
</dbReference>
<dbReference type="CDD" id="cd03557">
    <property type="entry name" value="L-arabinose_isomerase"/>
    <property type="match status" value="1"/>
</dbReference>
<dbReference type="Gene3D" id="3.40.50.10940">
    <property type="match status" value="1"/>
</dbReference>
<dbReference type="HAMAP" id="MF_00519">
    <property type="entry name" value="Arabinose_Isome"/>
    <property type="match status" value="1"/>
</dbReference>
<dbReference type="InterPro" id="IPR024664">
    <property type="entry name" value="Ara_Isoase_C"/>
</dbReference>
<dbReference type="InterPro" id="IPR055390">
    <property type="entry name" value="AraA_central"/>
</dbReference>
<dbReference type="InterPro" id="IPR055389">
    <property type="entry name" value="AraA_N"/>
</dbReference>
<dbReference type="InterPro" id="IPR038583">
    <property type="entry name" value="AraA_N_sf"/>
</dbReference>
<dbReference type="InterPro" id="IPR004216">
    <property type="entry name" value="Fuc/Ara_isomerase_C"/>
</dbReference>
<dbReference type="InterPro" id="IPR009015">
    <property type="entry name" value="Fucose_isomerase_N/cen_sf"/>
</dbReference>
<dbReference type="InterPro" id="IPR003762">
    <property type="entry name" value="Lara_isomerase"/>
</dbReference>
<dbReference type="NCBIfam" id="NF002795">
    <property type="entry name" value="PRK02929.1"/>
    <property type="match status" value="1"/>
</dbReference>
<dbReference type="PANTHER" id="PTHR38464">
    <property type="entry name" value="L-ARABINOSE ISOMERASE"/>
    <property type="match status" value="1"/>
</dbReference>
<dbReference type="PANTHER" id="PTHR38464:SF1">
    <property type="entry name" value="L-ARABINOSE ISOMERASE"/>
    <property type="match status" value="1"/>
</dbReference>
<dbReference type="Pfam" id="PF24856">
    <property type="entry name" value="AraA_central"/>
    <property type="match status" value="1"/>
</dbReference>
<dbReference type="Pfam" id="PF02610">
    <property type="entry name" value="AraA_N"/>
    <property type="match status" value="1"/>
</dbReference>
<dbReference type="Pfam" id="PF11762">
    <property type="entry name" value="Arabinose_Iso_C"/>
    <property type="match status" value="1"/>
</dbReference>
<dbReference type="PIRSF" id="PIRSF001478">
    <property type="entry name" value="L-ara_isomerase"/>
    <property type="match status" value="1"/>
</dbReference>
<dbReference type="SUPFAM" id="SSF50443">
    <property type="entry name" value="FucI/AraA C-terminal domain-like"/>
    <property type="match status" value="1"/>
</dbReference>
<dbReference type="SUPFAM" id="SSF53743">
    <property type="entry name" value="FucI/AraA N-terminal and middle domains"/>
    <property type="match status" value="1"/>
</dbReference>
<protein>
    <recommendedName>
        <fullName evidence="1">L-arabinose isomerase</fullName>
        <ecNumber evidence="1">5.3.1.4</ecNumber>
    </recommendedName>
</protein>
<gene>
    <name evidence="1" type="primary">araA</name>
    <name type="ordered locus">Noca_0382</name>
</gene>
<comment type="function">
    <text evidence="1">Catalyzes the conversion of L-arabinose to L-ribulose.</text>
</comment>
<comment type="catalytic activity">
    <reaction evidence="1">
        <text>beta-L-arabinopyranose = L-ribulose</text>
        <dbReference type="Rhea" id="RHEA:14821"/>
        <dbReference type="ChEBI" id="CHEBI:16880"/>
        <dbReference type="ChEBI" id="CHEBI:40886"/>
        <dbReference type="EC" id="5.3.1.4"/>
    </reaction>
</comment>
<comment type="cofactor">
    <cofactor evidence="1">
        <name>Mn(2+)</name>
        <dbReference type="ChEBI" id="CHEBI:29035"/>
    </cofactor>
    <text evidence="1">Binds 1 Mn(2+) ion per subunit.</text>
</comment>
<comment type="pathway">
    <text evidence="1">Carbohydrate degradation; L-arabinose degradation via L-ribulose; D-xylulose 5-phosphate from L-arabinose (bacterial route): step 1/3.</text>
</comment>
<comment type="similarity">
    <text evidence="1">Belongs to the arabinose isomerase family.</text>
</comment>
<evidence type="ECO:0000255" key="1">
    <source>
        <dbReference type="HAMAP-Rule" id="MF_00519"/>
    </source>
</evidence>
<name>ARAA_NOCSJ</name>
<sequence>MTHHPDELEIWFLTGSQHLYGPEVIDQVAEHAARIVAALDASPHLPVRVVSKPVLTETDSIRRALLDATATDSCVGVIAWMHTFSPAKMWITGLDALRKPLLHLHTQANQALPWAEIDMDFMNLNQAAHGDREFASVQTRMGVARKTVTGHVEDPEVARRIGLWARAALGRHALAGMRLARFGDNMRNVAVTEGDKVEAERRFGVSVNTWGVNDLVAVVDEVADADVDKLCEEYADSYDVAAELLPSGERHESLRYGARIELGLRSFLTEGGFTAFTSNFEDLGGLRQLPGLAVQRLMADGYGFGGEGDWKTSVLLRTLKVVADGLPGGTSFMEDYTYHLVPGEERILGAHMLEVCPSIAEGRPSLEIHPLSIGGREDPVRLVFDAAPGPAVLLGLADLGERFRFVGNEVEVVAPTEPLPNLPVARAVWRPAPDLRTSTEAWLMAGGPHHTVLSTALGAEHLDDLAEMTGTELVLVDADTTIRGLAKELRWSAAYHRLAQGL</sequence>
<organism>
    <name type="scientific">Nocardioides sp. (strain ATCC BAA-499 / JS614)</name>
    <dbReference type="NCBI Taxonomy" id="196162"/>
    <lineage>
        <taxon>Bacteria</taxon>
        <taxon>Bacillati</taxon>
        <taxon>Actinomycetota</taxon>
        <taxon>Actinomycetes</taxon>
        <taxon>Propionibacteriales</taxon>
        <taxon>Nocardioidaceae</taxon>
        <taxon>Nocardioides</taxon>
    </lineage>
</organism>
<feature type="chain" id="PRO_0000312614" description="L-arabinose isomerase">
    <location>
        <begin position="1"/>
        <end position="502"/>
    </location>
</feature>
<feature type="binding site" evidence="1">
    <location>
        <position position="307"/>
    </location>
    <ligand>
        <name>Mn(2+)</name>
        <dbReference type="ChEBI" id="CHEBI:29035"/>
    </ligand>
</feature>
<feature type="binding site" evidence="1">
    <location>
        <position position="334"/>
    </location>
    <ligand>
        <name>Mn(2+)</name>
        <dbReference type="ChEBI" id="CHEBI:29035"/>
    </ligand>
</feature>
<feature type="binding site" evidence="1">
    <location>
        <position position="351"/>
    </location>
    <ligand>
        <name>Mn(2+)</name>
        <dbReference type="ChEBI" id="CHEBI:29035"/>
    </ligand>
</feature>
<feature type="binding site" evidence="1">
    <location>
        <position position="450"/>
    </location>
    <ligand>
        <name>Mn(2+)</name>
        <dbReference type="ChEBI" id="CHEBI:29035"/>
    </ligand>
</feature>
<reference key="1">
    <citation type="submission" date="2006-12" db="EMBL/GenBank/DDBJ databases">
        <title>Complete sequence of chromosome 1 of Nocardioides sp. JS614.</title>
        <authorList>
            <person name="Copeland A."/>
            <person name="Lucas S."/>
            <person name="Lapidus A."/>
            <person name="Barry K."/>
            <person name="Detter J.C."/>
            <person name="Glavina del Rio T."/>
            <person name="Hammon N."/>
            <person name="Israni S."/>
            <person name="Dalin E."/>
            <person name="Tice H."/>
            <person name="Pitluck S."/>
            <person name="Thompson L.S."/>
            <person name="Brettin T."/>
            <person name="Bruce D."/>
            <person name="Han C."/>
            <person name="Tapia R."/>
            <person name="Schmutz J."/>
            <person name="Larimer F."/>
            <person name="Land M."/>
            <person name="Hauser L."/>
            <person name="Kyrpides N."/>
            <person name="Kim E."/>
            <person name="Mattes T."/>
            <person name="Gossett J."/>
            <person name="Richardson P."/>
        </authorList>
    </citation>
    <scope>NUCLEOTIDE SEQUENCE [LARGE SCALE GENOMIC DNA]</scope>
    <source>
        <strain>ATCC BAA-499 / JS614</strain>
    </source>
</reference>
<accession>A1SDP0</accession>
<proteinExistence type="inferred from homology"/>